<reference key="1">
    <citation type="journal article" date="2003" name="J. Bacteriol.">
        <title>Complete genome sequence of the ammonia-oxidizing bacterium and obligate chemolithoautotroph Nitrosomonas europaea.</title>
        <authorList>
            <person name="Chain P."/>
            <person name="Lamerdin J.E."/>
            <person name="Larimer F.W."/>
            <person name="Regala W."/>
            <person name="Lao V."/>
            <person name="Land M.L."/>
            <person name="Hauser L."/>
            <person name="Hooper A.B."/>
            <person name="Klotz M.G."/>
            <person name="Norton J."/>
            <person name="Sayavedra-Soto L.A."/>
            <person name="Arciero D.M."/>
            <person name="Hommes N.G."/>
            <person name="Whittaker M.M."/>
            <person name="Arp D.J."/>
        </authorList>
    </citation>
    <scope>NUCLEOTIDE SEQUENCE [LARGE SCALE GENOMIC DNA]</scope>
    <source>
        <strain>ATCC 19718 / CIP 103999 / KCTC 2705 / NBRC 14298</strain>
    </source>
</reference>
<comment type="catalytic activity">
    <reaction evidence="1">
        <text>1-(5-phospho-beta-D-ribosyl)-5-[(5-phospho-beta-D-ribosylamino)methylideneamino]imidazole-4-carboxamide = 5-[(5-phospho-1-deoxy-D-ribulos-1-ylimino)methylamino]-1-(5-phospho-beta-D-ribosyl)imidazole-4-carboxamide</text>
        <dbReference type="Rhea" id="RHEA:15469"/>
        <dbReference type="ChEBI" id="CHEBI:58435"/>
        <dbReference type="ChEBI" id="CHEBI:58525"/>
        <dbReference type="EC" id="5.3.1.16"/>
    </reaction>
</comment>
<comment type="pathway">
    <text evidence="1">Amino-acid biosynthesis; L-histidine biosynthesis; L-histidine from 5-phospho-alpha-D-ribose 1-diphosphate: step 4/9.</text>
</comment>
<comment type="subcellular location">
    <subcellularLocation>
        <location evidence="1">Cytoplasm</location>
    </subcellularLocation>
</comment>
<comment type="similarity">
    <text evidence="1">Belongs to the HisA/HisF family.</text>
</comment>
<proteinExistence type="inferred from homology"/>
<accession>Q82WM5</accession>
<protein>
    <recommendedName>
        <fullName evidence="1">1-(5-phosphoribosyl)-5-[(5-phosphoribosylamino)methylideneamino] imidazole-4-carboxamide isomerase</fullName>
        <ecNumber evidence="1">5.3.1.16</ecNumber>
    </recommendedName>
    <alternativeName>
        <fullName evidence="1">Phosphoribosylformimino-5-aminoimidazole carboxamide ribotide isomerase</fullName>
    </alternativeName>
</protein>
<feature type="chain" id="PRO_0000142027" description="1-(5-phosphoribosyl)-5-[(5-phosphoribosylamino)methylideneamino] imidazole-4-carboxamide isomerase">
    <location>
        <begin position="1"/>
        <end position="249"/>
    </location>
</feature>
<feature type="active site" description="Proton acceptor" evidence="1">
    <location>
        <position position="8"/>
    </location>
</feature>
<feature type="active site" description="Proton donor" evidence="1">
    <location>
        <position position="131"/>
    </location>
</feature>
<gene>
    <name evidence="1" type="primary">hisA</name>
    <name type="ordered locus">NE0644</name>
</gene>
<name>HIS4_NITEU</name>
<sequence length="249" mass="26519">MLIIPAIDLKDGHCVRLKQGIMENATVFSENPETVALHWLDNGARQLHLVDLNGAFAGKPKNGEAIRAIVEAVDGRIPIQLGGGIRDLETIEYYLDNGITYVIIGTAAVKVPGFLHDACYAFPGQIMVGLDAKSGKVAVDGWSKVTGHDVIDLAKKFQDYGVEAIIHTDIGRDGMLSGLNIEATVELAQALTIPVIASGGVTNLDDIRKLCEVQSEGITGVITGRAIYQGSLDFKEAQALADQLDAATI</sequence>
<organism>
    <name type="scientific">Nitrosomonas europaea (strain ATCC 19718 / CIP 103999 / KCTC 2705 / NBRC 14298)</name>
    <dbReference type="NCBI Taxonomy" id="228410"/>
    <lineage>
        <taxon>Bacteria</taxon>
        <taxon>Pseudomonadati</taxon>
        <taxon>Pseudomonadota</taxon>
        <taxon>Betaproteobacteria</taxon>
        <taxon>Nitrosomonadales</taxon>
        <taxon>Nitrosomonadaceae</taxon>
        <taxon>Nitrosomonas</taxon>
    </lineage>
</organism>
<keyword id="KW-0028">Amino-acid biosynthesis</keyword>
<keyword id="KW-0963">Cytoplasm</keyword>
<keyword id="KW-0368">Histidine biosynthesis</keyword>
<keyword id="KW-0413">Isomerase</keyword>
<keyword id="KW-1185">Reference proteome</keyword>
<evidence type="ECO:0000255" key="1">
    <source>
        <dbReference type="HAMAP-Rule" id="MF_01014"/>
    </source>
</evidence>
<dbReference type="EC" id="5.3.1.16" evidence="1"/>
<dbReference type="EMBL" id="AL954747">
    <property type="protein sequence ID" value="CAD84555.1"/>
    <property type="molecule type" value="Genomic_DNA"/>
</dbReference>
<dbReference type="RefSeq" id="WP_011111267.1">
    <property type="nucleotide sequence ID" value="NC_004757.1"/>
</dbReference>
<dbReference type="SMR" id="Q82WM5"/>
<dbReference type="STRING" id="228410.NE0644"/>
<dbReference type="GeneID" id="87103841"/>
<dbReference type="KEGG" id="neu:NE0644"/>
<dbReference type="eggNOG" id="COG0106">
    <property type="taxonomic scope" value="Bacteria"/>
</dbReference>
<dbReference type="HOGENOM" id="CLU_048577_1_1_4"/>
<dbReference type="OrthoDB" id="9807749at2"/>
<dbReference type="PhylomeDB" id="Q82WM5"/>
<dbReference type="UniPathway" id="UPA00031">
    <property type="reaction ID" value="UER00009"/>
</dbReference>
<dbReference type="Proteomes" id="UP000001416">
    <property type="component" value="Chromosome"/>
</dbReference>
<dbReference type="GO" id="GO:0005737">
    <property type="term" value="C:cytoplasm"/>
    <property type="evidence" value="ECO:0007669"/>
    <property type="project" value="UniProtKB-SubCell"/>
</dbReference>
<dbReference type="GO" id="GO:0003949">
    <property type="term" value="F:1-(5-phosphoribosyl)-5-[(5-phosphoribosylamino)methylideneamino]imidazole-4-carboxamide isomerase activity"/>
    <property type="evidence" value="ECO:0007669"/>
    <property type="project" value="UniProtKB-UniRule"/>
</dbReference>
<dbReference type="GO" id="GO:0000105">
    <property type="term" value="P:L-histidine biosynthetic process"/>
    <property type="evidence" value="ECO:0007669"/>
    <property type="project" value="UniProtKB-UniRule"/>
</dbReference>
<dbReference type="GO" id="GO:0000162">
    <property type="term" value="P:L-tryptophan biosynthetic process"/>
    <property type="evidence" value="ECO:0007669"/>
    <property type="project" value="TreeGrafter"/>
</dbReference>
<dbReference type="CDD" id="cd04732">
    <property type="entry name" value="HisA"/>
    <property type="match status" value="1"/>
</dbReference>
<dbReference type="FunFam" id="3.20.20.70:FF:000009">
    <property type="entry name" value="1-(5-phosphoribosyl)-5-[(5-phosphoribosylamino)methylideneamino] imidazole-4-carboxamide isomerase"/>
    <property type="match status" value="1"/>
</dbReference>
<dbReference type="Gene3D" id="3.20.20.70">
    <property type="entry name" value="Aldolase class I"/>
    <property type="match status" value="1"/>
</dbReference>
<dbReference type="HAMAP" id="MF_01014">
    <property type="entry name" value="HisA"/>
    <property type="match status" value="1"/>
</dbReference>
<dbReference type="InterPro" id="IPR013785">
    <property type="entry name" value="Aldolase_TIM"/>
</dbReference>
<dbReference type="InterPro" id="IPR006062">
    <property type="entry name" value="His_biosynth"/>
</dbReference>
<dbReference type="InterPro" id="IPR006063">
    <property type="entry name" value="HisA_bact_arch"/>
</dbReference>
<dbReference type="InterPro" id="IPR044524">
    <property type="entry name" value="Isoase_HisA-like"/>
</dbReference>
<dbReference type="InterPro" id="IPR023016">
    <property type="entry name" value="Isoase_HisA-like_bact"/>
</dbReference>
<dbReference type="InterPro" id="IPR011060">
    <property type="entry name" value="RibuloseP-bd_barrel"/>
</dbReference>
<dbReference type="NCBIfam" id="TIGR00007">
    <property type="entry name" value="1-(5-phosphoribosyl)-5-[(5-phosphoribosylamino)methylideneamino]imidazole-4-carboxamide isomerase"/>
    <property type="match status" value="1"/>
</dbReference>
<dbReference type="NCBIfam" id="NF010112">
    <property type="entry name" value="PRK13585.1"/>
    <property type="match status" value="1"/>
</dbReference>
<dbReference type="PANTHER" id="PTHR43090">
    <property type="entry name" value="1-(5-PHOSPHORIBOSYL)-5-[(5-PHOSPHORIBOSYLAMINO)METHYLIDENEAMINO] IMIDAZOLE-4-CARBOXAMIDE ISOMERASE"/>
    <property type="match status" value="1"/>
</dbReference>
<dbReference type="PANTHER" id="PTHR43090:SF2">
    <property type="entry name" value="1-(5-PHOSPHORIBOSYL)-5-[(5-PHOSPHORIBOSYLAMINO)METHYLIDENEAMINO] IMIDAZOLE-4-CARBOXAMIDE ISOMERASE"/>
    <property type="match status" value="1"/>
</dbReference>
<dbReference type="Pfam" id="PF00977">
    <property type="entry name" value="His_biosynth"/>
    <property type="match status" value="1"/>
</dbReference>
<dbReference type="SUPFAM" id="SSF51366">
    <property type="entry name" value="Ribulose-phoshate binding barrel"/>
    <property type="match status" value="1"/>
</dbReference>